<evidence type="ECO:0000255" key="1">
    <source>
        <dbReference type="HAMAP-Rule" id="MF_02103"/>
    </source>
</evidence>
<evidence type="ECO:0000256" key="2">
    <source>
        <dbReference type="SAM" id="MobiDB-lite"/>
    </source>
</evidence>
<sequence length="476" mass="53089">MPMKIENGPFWKRVRENLDNDFMRGAVAGMQDRGYVRRLGVIEELGHWEEWRSLAEQIRKHTLENLDFYLMQLSENVAKRGGHVFFAQTAEEANEYIRRVALEKQAKKIVKSKSMVTEEINLNPVLEAIGCQVVETDLGEYILQIDDHDPPSHIVGPALHKNKEQIRDVFQRKLGYTKSSDPVELARHAREMLRRDYLTADIGITGCNFAIAESGSITLVTNEGNADLVTALPKTQITVMGMERIVPTFEEMEVLVSMLTRSAVGQKLTSYITVLTGPRDEGDVDGPEEFHLVIVDNGRSSILGTEFQPVLQCIRCAACVNVCPVYRHIGGHSYGSIYSGPIGAVLSPLLGGYDDYKELPYASSLCAACTEACPVKIPLHELLIKHRQIIVEREGKAPVAEKLAMKAFRLGTASPSLYRFGTKLAPSAFAPFAEDGRITKGPGPLKAWTESREFPAPSKERFRDWFQTRQKGGNPS</sequence>
<name>LUTB_GEOKA</name>
<accession>Q5L301</accession>
<organism>
    <name type="scientific">Geobacillus kaustophilus (strain HTA426)</name>
    <dbReference type="NCBI Taxonomy" id="235909"/>
    <lineage>
        <taxon>Bacteria</taxon>
        <taxon>Bacillati</taxon>
        <taxon>Bacillota</taxon>
        <taxon>Bacilli</taxon>
        <taxon>Bacillales</taxon>
        <taxon>Anoxybacillaceae</taxon>
        <taxon>Geobacillus</taxon>
        <taxon>Geobacillus thermoleovorans group</taxon>
    </lineage>
</organism>
<dbReference type="EMBL" id="BA000043">
    <property type="protein sequence ID" value="BAD74679.1"/>
    <property type="molecule type" value="Genomic_DNA"/>
</dbReference>
<dbReference type="RefSeq" id="WP_011229898.1">
    <property type="nucleotide sequence ID" value="NC_006510.1"/>
</dbReference>
<dbReference type="STRING" id="235909.GK0394"/>
<dbReference type="KEGG" id="gka:GK0394"/>
<dbReference type="eggNOG" id="COG1139">
    <property type="taxonomic scope" value="Bacteria"/>
</dbReference>
<dbReference type="HOGENOM" id="CLU_027059_2_0_9"/>
<dbReference type="Proteomes" id="UP000001172">
    <property type="component" value="Chromosome"/>
</dbReference>
<dbReference type="GO" id="GO:0051539">
    <property type="term" value="F:4 iron, 4 sulfur cluster binding"/>
    <property type="evidence" value="ECO:0007669"/>
    <property type="project" value="UniProtKB-KW"/>
</dbReference>
<dbReference type="GO" id="GO:0046872">
    <property type="term" value="F:metal ion binding"/>
    <property type="evidence" value="ECO:0007669"/>
    <property type="project" value="UniProtKB-KW"/>
</dbReference>
<dbReference type="GO" id="GO:0006089">
    <property type="term" value="P:lactate metabolic process"/>
    <property type="evidence" value="ECO:0007669"/>
    <property type="project" value="UniProtKB-UniRule"/>
</dbReference>
<dbReference type="Gene3D" id="1.10.1060.10">
    <property type="entry name" value="Alpha-helical ferredoxin"/>
    <property type="match status" value="1"/>
</dbReference>
<dbReference type="Gene3D" id="3.40.50.10420">
    <property type="entry name" value="NagB/RpiA/CoA transferase-like"/>
    <property type="match status" value="1"/>
</dbReference>
<dbReference type="HAMAP" id="MF_02103">
    <property type="entry name" value="LutB"/>
    <property type="match status" value="1"/>
</dbReference>
<dbReference type="InterPro" id="IPR017896">
    <property type="entry name" value="4Fe4S_Fe-S-bd"/>
</dbReference>
<dbReference type="InterPro" id="IPR017900">
    <property type="entry name" value="4Fe4S_Fe_S_CS"/>
</dbReference>
<dbReference type="InterPro" id="IPR024185">
    <property type="entry name" value="FTHF_cligase-like_sf"/>
</dbReference>
<dbReference type="InterPro" id="IPR009051">
    <property type="entry name" value="Helical_ferredxn"/>
</dbReference>
<dbReference type="InterPro" id="IPR003741">
    <property type="entry name" value="LUD_dom"/>
</dbReference>
<dbReference type="InterPro" id="IPR022825">
    <property type="entry name" value="LutB"/>
</dbReference>
<dbReference type="InterPro" id="IPR004452">
    <property type="entry name" value="LutB/LldF"/>
</dbReference>
<dbReference type="InterPro" id="IPR024569">
    <property type="entry name" value="LutB_C"/>
</dbReference>
<dbReference type="InterPro" id="IPR037171">
    <property type="entry name" value="NagB/RpiA_transferase-like"/>
</dbReference>
<dbReference type="NCBIfam" id="TIGR00273">
    <property type="entry name" value="LutB/LldF family L-lactate oxidation iron-sulfur protein"/>
    <property type="match status" value="1"/>
</dbReference>
<dbReference type="PANTHER" id="PTHR47153">
    <property type="entry name" value="LACTATE UTILIZATION PROTEIN B"/>
    <property type="match status" value="1"/>
</dbReference>
<dbReference type="PANTHER" id="PTHR47153:SF2">
    <property type="entry name" value="LACTATE UTILIZATION PROTEIN B"/>
    <property type="match status" value="1"/>
</dbReference>
<dbReference type="Pfam" id="PF13183">
    <property type="entry name" value="Fer4_8"/>
    <property type="match status" value="1"/>
</dbReference>
<dbReference type="Pfam" id="PF02589">
    <property type="entry name" value="LUD_dom"/>
    <property type="match status" value="1"/>
</dbReference>
<dbReference type="Pfam" id="PF11870">
    <property type="entry name" value="LutB_C"/>
    <property type="match status" value="1"/>
</dbReference>
<dbReference type="SUPFAM" id="SSF46548">
    <property type="entry name" value="alpha-helical ferredoxin"/>
    <property type="match status" value="1"/>
</dbReference>
<dbReference type="SUPFAM" id="SSF100950">
    <property type="entry name" value="NagB/RpiA/CoA transferase-like"/>
    <property type="match status" value="1"/>
</dbReference>
<dbReference type="PROSITE" id="PS00198">
    <property type="entry name" value="4FE4S_FER_1"/>
    <property type="match status" value="1"/>
</dbReference>
<dbReference type="PROSITE" id="PS51379">
    <property type="entry name" value="4FE4S_FER_2"/>
    <property type="match status" value="1"/>
</dbReference>
<reference key="1">
    <citation type="journal article" date="2004" name="Nucleic Acids Res.">
        <title>Thermoadaptation trait revealed by the genome sequence of thermophilic Geobacillus kaustophilus.</title>
        <authorList>
            <person name="Takami H."/>
            <person name="Takaki Y."/>
            <person name="Chee G.-J."/>
            <person name="Nishi S."/>
            <person name="Shimamura S."/>
            <person name="Suzuki H."/>
            <person name="Matsui S."/>
            <person name="Uchiyama I."/>
        </authorList>
    </citation>
    <scope>NUCLEOTIDE SEQUENCE [LARGE SCALE GENOMIC DNA]</scope>
    <source>
        <strain>HTA426</strain>
    </source>
</reference>
<comment type="function">
    <text evidence="1">Is involved in L-lactate degradation and allows cells to grow with lactate as the sole carbon source. Has probably a role as an electron transporter during oxidation of L-lactate.</text>
</comment>
<comment type="similarity">
    <text evidence="1">Belongs to the LutB/YkgF family.</text>
</comment>
<proteinExistence type="inferred from homology"/>
<protein>
    <recommendedName>
        <fullName evidence="1">Lactate utilization protein B</fullName>
    </recommendedName>
</protein>
<feature type="chain" id="PRO_0000383981" description="Lactate utilization protein B">
    <location>
        <begin position="1"/>
        <end position="476"/>
    </location>
</feature>
<feature type="domain" description="4Fe-4S ferredoxin-type 1" evidence="1">
    <location>
        <begin position="304"/>
        <end position="334"/>
    </location>
</feature>
<feature type="domain" description="4Fe-4S ferredoxin-type 2" evidence="1">
    <location>
        <begin position="353"/>
        <end position="382"/>
    </location>
</feature>
<feature type="region of interest" description="Disordered" evidence="2">
    <location>
        <begin position="440"/>
        <end position="476"/>
    </location>
</feature>
<feature type="compositionally biased region" description="Basic and acidic residues" evidence="2">
    <location>
        <begin position="449"/>
        <end position="466"/>
    </location>
</feature>
<feature type="compositionally biased region" description="Polar residues" evidence="2">
    <location>
        <begin position="467"/>
        <end position="476"/>
    </location>
</feature>
<feature type="binding site" evidence="1">
    <location>
        <position position="313"/>
    </location>
    <ligand>
        <name>[4Fe-4S] cluster</name>
        <dbReference type="ChEBI" id="CHEBI:49883"/>
        <label>1</label>
    </ligand>
</feature>
<feature type="binding site" evidence="1">
    <location>
        <position position="316"/>
    </location>
    <ligand>
        <name>[4Fe-4S] cluster</name>
        <dbReference type="ChEBI" id="CHEBI:49883"/>
        <label>1</label>
    </ligand>
</feature>
<feature type="binding site" evidence="1">
    <location>
        <position position="319"/>
    </location>
    <ligand>
        <name>[4Fe-4S] cluster</name>
        <dbReference type="ChEBI" id="CHEBI:49883"/>
        <label>1</label>
    </ligand>
</feature>
<feature type="binding site" evidence="1">
    <location>
        <position position="323"/>
    </location>
    <ligand>
        <name>[4Fe-4S] cluster</name>
        <dbReference type="ChEBI" id="CHEBI:49883"/>
        <label>2</label>
    </ligand>
</feature>
<feature type="binding site" evidence="1">
    <location>
        <position position="366"/>
    </location>
    <ligand>
        <name>[4Fe-4S] cluster</name>
        <dbReference type="ChEBI" id="CHEBI:49883"/>
        <label>2</label>
    </ligand>
</feature>
<feature type="binding site" evidence="1">
    <location>
        <position position="369"/>
    </location>
    <ligand>
        <name>[4Fe-4S] cluster</name>
        <dbReference type="ChEBI" id="CHEBI:49883"/>
        <label>2</label>
    </ligand>
</feature>
<feature type="binding site" evidence="1">
    <location>
        <position position="373"/>
    </location>
    <ligand>
        <name>[4Fe-4S] cluster</name>
        <dbReference type="ChEBI" id="CHEBI:49883"/>
        <label>1</label>
    </ligand>
</feature>
<keyword id="KW-0004">4Fe-4S</keyword>
<keyword id="KW-0249">Electron transport</keyword>
<keyword id="KW-0408">Iron</keyword>
<keyword id="KW-0411">Iron-sulfur</keyword>
<keyword id="KW-0479">Metal-binding</keyword>
<keyword id="KW-1185">Reference proteome</keyword>
<keyword id="KW-0677">Repeat</keyword>
<keyword id="KW-0813">Transport</keyword>
<gene>
    <name evidence="1" type="primary">lutB</name>
    <name type="ordered locus">GK0394</name>
</gene>